<name>NFI_SACI6</name>
<organism>
    <name type="scientific">Saccharolobus islandicus (strain M.16.4 / Kamchatka #3)</name>
    <name type="common">Sulfolobus islandicus</name>
    <dbReference type="NCBI Taxonomy" id="426118"/>
    <lineage>
        <taxon>Archaea</taxon>
        <taxon>Thermoproteota</taxon>
        <taxon>Thermoprotei</taxon>
        <taxon>Sulfolobales</taxon>
        <taxon>Sulfolobaceae</taxon>
        <taxon>Saccharolobus</taxon>
    </lineage>
</organism>
<reference key="1">
    <citation type="journal article" date="2009" name="Proc. Natl. Acad. Sci. U.S.A.">
        <title>Biogeography of the Sulfolobus islandicus pan-genome.</title>
        <authorList>
            <person name="Reno M.L."/>
            <person name="Held N.L."/>
            <person name="Fields C.J."/>
            <person name="Burke P.V."/>
            <person name="Whitaker R.J."/>
        </authorList>
    </citation>
    <scope>NUCLEOTIDE SEQUENCE [LARGE SCALE GENOMIC DNA]</scope>
    <source>
        <strain>M.16.4 / Kamchatka #3</strain>
    </source>
</reference>
<dbReference type="EC" id="3.1.21.7" evidence="1"/>
<dbReference type="EMBL" id="CP001402">
    <property type="protein sequence ID" value="ACR40895.1"/>
    <property type="molecule type" value="Genomic_DNA"/>
</dbReference>
<dbReference type="RefSeq" id="WP_010923862.1">
    <property type="nucleotide sequence ID" value="NC_012726.1"/>
</dbReference>
<dbReference type="SMR" id="C4KKT0"/>
<dbReference type="KEGG" id="sid:M164_0261"/>
<dbReference type="HOGENOM" id="CLU_047631_1_1_2"/>
<dbReference type="Proteomes" id="UP000001479">
    <property type="component" value="Chromosome"/>
</dbReference>
<dbReference type="GO" id="GO:0005737">
    <property type="term" value="C:cytoplasm"/>
    <property type="evidence" value="ECO:0007669"/>
    <property type="project" value="UniProtKB-SubCell"/>
</dbReference>
<dbReference type="GO" id="GO:0043737">
    <property type="term" value="F:deoxyribonuclease V activity"/>
    <property type="evidence" value="ECO:0007669"/>
    <property type="project" value="UniProtKB-UniRule"/>
</dbReference>
<dbReference type="GO" id="GO:0000287">
    <property type="term" value="F:magnesium ion binding"/>
    <property type="evidence" value="ECO:0007669"/>
    <property type="project" value="UniProtKB-UniRule"/>
</dbReference>
<dbReference type="GO" id="GO:0016891">
    <property type="term" value="F:RNA endonuclease activity, producing 5'-phosphomonoesters"/>
    <property type="evidence" value="ECO:0007669"/>
    <property type="project" value="TreeGrafter"/>
</dbReference>
<dbReference type="GO" id="GO:0003727">
    <property type="term" value="F:single-stranded RNA binding"/>
    <property type="evidence" value="ECO:0007669"/>
    <property type="project" value="TreeGrafter"/>
</dbReference>
<dbReference type="GO" id="GO:0006281">
    <property type="term" value="P:DNA repair"/>
    <property type="evidence" value="ECO:0007669"/>
    <property type="project" value="UniProtKB-UniRule"/>
</dbReference>
<dbReference type="CDD" id="cd06559">
    <property type="entry name" value="Endonuclease_V"/>
    <property type="match status" value="1"/>
</dbReference>
<dbReference type="FunFam" id="3.30.2170.10:FF:000006">
    <property type="entry name" value="Endonuclease V"/>
    <property type="match status" value="1"/>
</dbReference>
<dbReference type="Gene3D" id="3.30.2170.10">
    <property type="entry name" value="archaeoglobus fulgidus dsm 4304 superfamily"/>
    <property type="match status" value="1"/>
</dbReference>
<dbReference type="HAMAP" id="MF_00801">
    <property type="entry name" value="Endonuclease_5"/>
    <property type="match status" value="1"/>
</dbReference>
<dbReference type="InterPro" id="IPR007581">
    <property type="entry name" value="Endonuclease-V"/>
</dbReference>
<dbReference type="PANTHER" id="PTHR28511">
    <property type="entry name" value="ENDONUCLEASE V"/>
    <property type="match status" value="1"/>
</dbReference>
<dbReference type="PANTHER" id="PTHR28511:SF1">
    <property type="entry name" value="ENDONUCLEASE V"/>
    <property type="match status" value="1"/>
</dbReference>
<dbReference type="Pfam" id="PF04493">
    <property type="entry name" value="Endonuclease_5"/>
    <property type="match status" value="1"/>
</dbReference>
<proteinExistence type="inferred from homology"/>
<keyword id="KW-0963">Cytoplasm</keyword>
<keyword id="KW-0227">DNA damage</keyword>
<keyword id="KW-0234">DNA repair</keyword>
<keyword id="KW-0255">Endonuclease</keyword>
<keyword id="KW-0378">Hydrolase</keyword>
<keyword id="KW-0460">Magnesium</keyword>
<keyword id="KW-0479">Metal-binding</keyword>
<keyword id="KW-0540">Nuclease</keyword>
<feature type="chain" id="PRO_1000212978" description="Endonuclease V">
    <location>
        <begin position="1"/>
        <end position="198"/>
    </location>
</feature>
<feature type="binding site" evidence="1">
    <location>
        <position position="38"/>
    </location>
    <ligand>
        <name>Mg(2+)</name>
        <dbReference type="ChEBI" id="CHEBI:18420"/>
    </ligand>
</feature>
<feature type="binding site" evidence="1">
    <location>
        <position position="101"/>
    </location>
    <ligand>
        <name>Mg(2+)</name>
        <dbReference type="ChEBI" id="CHEBI:18420"/>
    </ligand>
</feature>
<feature type="site" description="Interaction with target DNA" evidence="1">
    <location>
        <position position="73"/>
    </location>
</feature>
<evidence type="ECO:0000255" key="1">
    <source>
        <dbReference type="HAMAP-Rule" id="MF_00801"/>
    </source>
</evidence>
<protein>
    <recommendedName>
        <fullName evidence="1">Endonuclease V</fullName>
        <ecNumber evidence="1">3.1.21.7</ecNumber>
    </recommendedName>
    <alternativeName>
        <fullName evidence="1">Deoxyinosine 3'endonuclease</fullName>
    </alternativeName>
    <alternativeName>
        <fullName evidence="1">Deoxyribonuclease V</fullName>
        <shortName evidence="1">DNase V</shortName>
    </alternativeName>
</protein>
<sequence length="198" mass="22051">MVEKHLLEFLEKLQFLISKNVKISHYGIENVKKICGVDIAYKGNLGFSVGVSMDINSGDYNYKSYVGEVNFPYIPGFLFMREAPLMIKAIEGLDCHLLLVDGHGIAHPRKSGIAAVIGVLLDFPTIGVAKSRLTGDLVNESEITYVYLNGEKVGVKFGRYFYSPGNKVDLQDCIELGKRGYPKVLKIADMLTKKIKKE</sequence>
<accession>C4KKT0</accession>
<gene>
    <name evidence="1" type="primary">nfi</name>
    <name type="ordered locus">M164_0261</name>
</gene>
<comment type="function">
    <text evidence="1">DNA repair enzyme involved in the repair of deaminated bases. Selectively cleaves double-stranded DNA at the second phosphodiester bond 3' to a deoxyinosine leaving behind the intact lesion on the nicked DNA.</text>
</comment>
<comment type="catalytic activity">
    <reaction evidence="1">
        <text>Endonucleolytic cleavage at apurinic or apyrimidinic sites to products with a 5'-phosphate.</text>
        <dbReference type="EC" id="3.1.21.7"/>
    </reaction>
</comment>
<comment type="cofactor">
    <cofactor evidence="1">
        <name>Mg(2+)</name>
        <dbReference type="ChEBI" id="CHEBI:18420"/>
    </cofactor>
</comment>
<comment type="subcellular location">
    <subcellularLocation>
        <location evidence="1">Cytoplasm</location>
    </subcellularLocation>
</comment>
<comment type="similarity">
    <text evidence="1">Belongs to the endonuclease V family.</text>
</comment>